<protein>
    <recommendedName>
        <fullName evidence="8">Mu-conotoxin BuIIIB</fullName>
    </recommendedName>
    <alternativeName>
        <fullName>Conotoxin Bu16</fullName>
    </alternativeName>
</protein>
<keyword id="KW-0002">3D-structure</keyword>
<keyword id="KW-0027">Amidation</keyword>
<keyword id="KW-0165">Cleavage on pair of basic residues</keyword>
<keyword id="KW-1015">Disulfide bond</keyword>
<keyword id="KW-0872">Ion channel impairing toxin</keyword>
<keyword id="KW-0528">Neurotoxin</keyword>
<keyword id="KW-0964">Secreted</keyword>
<keyword id="KW-0732">Signal</keyword>
<keyword id="KW-0800">Toxin</keyword>
<keyword id="KW-0738">Voltage-gated sodium channel impairing toxin</keyword>
<sequence>MMSKLGVLLTICLLLFPLFALPQDGDQPADRPAERMQDDISSEQNPLLEKRVGERCCKNGKRGCGRWCRDHSRCCGRR</sequence>
<organism>
    <name type="scientific">Conus bullatus</name>
    <name type="common">Bubble cone</name>
    <dbReference type="NCBI Taxonomy" id="89438"/>
    <lineage>
        <taxon>Eukaryota</taxon>
        <taxon>Metazoa</taxon>
        <taxon>Spiralia</taxon>
        <taxon>Lophotrochozoa</taxon>
        <taxon>Mollusca</taxon>
        <taxon>Gastropoda</taxon>
        <taxon>Caenogastropoda</taxon>
        <taxon>Neogastropoda</taxon>
        <taxon>Conoidea</taxon>
        <taxon>Conidae</taxon>
        <taxon>Conus</taxon>
        <taxon>Textilia</taxon>
    </lineage>
</organism>
<proteinExistence type="evidence at protein level"/>
<evidence type="ECO:0000250" key="1"/>
<evidence type="ECO:0000255" key="2"/>
<evidence type="ECO:0000256" key="3">
    <source>
        <dbReference type="SAM" id="MobiDB-lite"/>
    </source>
</evidence>
<evidence type="ECO:0000269" key="4">
    <source>
    </source>
</evidence>
<evidence type="ECO:0000269" key="5">
    <source>
    </source>
</evidence>
<evidence type="ECO:0000269" key="6">
    <source>
    </source>
</evidence>
<evidence type="ECO:0000269" key="7">
    <source>
    </source>
</evidence>
<evidence type="ECO:0000303" key="8">
    <source>
    </source>
</evidence>
<evidence type="ECO:0000305" key="9"/>
<evidence type="ECO:0000305" key="10">
    <source>
    </source>
</evidence>
<evidence type="ECO:0000312" key="11">
    <source>
        <dbReference type="PDB" id="2LO9"/>
    </source>
</evidence>
<evidence type="ECO:0000312" key="12">
    <source>
        <dbReference type="PDB" id="2LOC"/>
    </source>
</evidence>
<evidence type="ECO:0007829" key="13">
    <source>
        <dbReference type="PDB" id="2LO9"/>
    </source>
</evidence>
<accession>C1J5M6</accession>
<comment type="function">
    <text evidence="4 5 6 7">Mu-conotoxins block voltage-gated sodium channels (Nav). This synthetic toxin potently blocks rNav1.4/SCN4A (Kd=0.34-3.6 nM), rNav1.2/SCN2A (Kd=13 nM), rNav1.3/SCN3A (Kd=200 nM), rNav1.1/SCN1A (Kd=360 nM), mNav1.6/SCN8A (IC(50)=1.8 uM), rNav1.5/SCN5A (IC(50)=9 uM), rNav1.6/SCN8A (IC(50)&gt;30 uM) (PubMed:18950653, PubMed:21652775, PubMed:23557677, PubMed:25632083). It is noteworthy that the toxin is 50-fold more potent on mouse Nav1.6 than on rat Nav1.6 (PubMed:25632083). The block of SCN4A is very slowly reversible (PubMed:18950653).</text>
</comment>
<comment type="subcellular location">
    <subcellularLocation>
        <location evidence="10">Secreted</location>
    </subcellularLocation>
</comment>
<comment type="tissue specificity">
    <text evidence="10">Expressed by the venom duct.</text>
</comment>
<comment type="domain">
    <text evidence="9">The cysteine framework is III (CC-C-C-CC). Classified in the M-5 branch, since 5 residues stand between the fourth and the fifth cysteine residues.</text>
</comment>
<comment type="miscellaneous">
    <text evidence="5 6">Negative results: does not or very weakly inhibits rNav1.7 and rNav1.8.</text>
</comment>
<comment type="similarity">
    <text evidence="9">Belongs to the conotoxin M superfamily.</text>
</comment>
<feature type="signal peptide" evidence="2">
    <location>
        <begin position="1"/>
        <end position="22"/>
    </location>
</feature>
<feature type="propeptide" id="PRO_0000384433" evidence="1">
    <location>
        <begin position="23"/>
        <end position="51"/>
    </location>
</feature>
<feature type="peptide" id="PRO_0000384434" description="Mu-conotoxin BuIIIB" evidence="10">
    <location>
        <begin position="52"/>
        <end position="75"/>
    </location>
</feature>
<feature type="region of interest" description="Disordered" evidence="3">
    <location>
        <begin position="26"/>
        <end position="46"/>
    </location>
</feature>
<feature type="compositionally biased region" description="Basic and acidic residues" evidence="3">
    <location>
        <begin position="28"/>
        <end position="38"/>
    </location>
</feature>
<feature type="modified residue" description="Cysteine amide" evidence="10">
    <location>
        <position position="75"/>
    </location>
</feature>
<feature type="disulfide bond" evidence="6 11 12">
    <location>
        <begin position="56"/>
        <end position="68"/>
    </location>
</feature>
<feature type="disulfide bond" evidence="6 11 12">
    <location>
        <begin position="57"/>
        <end position="74"/>
    </location>
</feature>
<feature type="disulfide bond" evidence="6 11 12">
    <location>
        <begin position="64"/>
        <end position="75"/>
    </location>
</feature>
<feature type="mutagenesis site" description="4-fold increase in blocking SCN3A (K(d) is 53 nM)." evidence="6">
    <location>
        <begin position="52"/>
        <end position="55"/>
    </location>
</feature>
<feature type="mutagenesis site" description="3.5-decrease in blocking SCN3A (K(d) is 710 nM)." evidence="6">
    <original>V</original>
    <variation>A</variation>
    <location>
        <position position="52"/>
    </location>
</feature>
<feature type="mutagenesis site" description="5-fold increase in blocking SCN3A (K(d) is 36 nM)." evidence="6">
    <original>G</original>
    <variation>A</variation>
    <location>
        <position position="53"/>
    </location>
</feature>
<feature type="mutagenesis site" description="Mutated into D-Ala. 40-fold increase in blocking SCN3A (K(d) is 4.8 nM)." evidence="6">
    <original>G</original>
    <variation>A</variation>
    <location>
        <position position="53"/>
    </location>
</feature>
<feature type="mutagenesis site" description="13-fold increase in blocking SCN3A (K(d) is 15 nM)." evidence="6">
    <original>E</original>
    <variation>A</variation>
    <location>
        <position position="54"/>
    </location>
</feature>
<feature type="mutagenesis site" description="No change in blocking SCN3A (K(d) is 118 nM)." evidence="6">
    <original>R</original>
    <variation>A</variation>
    <location>
        <position position="55"/>
    </location>
</feature>
<feature type="helix" evidence="13">
    <location>
        <begin position="54"/>
        <end position="57"/>
    </location>
</feature>
<feature type="helix" evidence="13">
    <location>
        <begin position="60"/>
        <end position="62"/>
    </location>
</feature>
<feature type="turn" evidence="13">
    <location>
        <begin position="63"/>
        <end position="65"/>
    </location>
</feature>
<feature type="helix" evidence="13">
    <location>
        <begin position="66"/>
        <end position="71"/>
    </location>
</feature>
<reference key="1">
    <citation type="journal article" date="2009" name="Toxicon">
        <title>Pruning nature: biodiversity-derived discovery of novel sodium channel blocking conotoxins from Conus bullatus.</title>
        <authorList>
            <person name="Holford M."/>
            <person name="Zhang M.-M."/>
            <person name="Gowd K.H."/>
            <person name="Azam L."/>
            <person name="Green B.R."/>
            <person name="Watkins M."/>
            <person name="Ownby J.-P."/>
            <person name="Yoshikami D."/>
            <person name="Bulaj G."/>
            <person name="Olivera B.M."/>
        </authorList>
    </citation>
    <scope>NUCLEOTIDE SEQUENCE [MRNA]</scope>
    <scope>SYNTHESIS OF 51-75</scope>
    <scope>FUNCTION ON SCN4A</scope>
    <scope>AMIDATION AT CYS-75</scope>
    <source>
        <tissue>Venom duct</tissue>
    </source>
</reference>
<reference key="2">
    <citation type="journal article" date="2011" name="BMC Genomics">
        <title>Characterization of the Conus bullatus genome and its venom-duct transcriptome.</title>
        <authorList>
            <person name="Hu H."/>
            <person name="Bandyopadhyay P.K."/>
            <person name="Olivera B.M."/>
            <person name="Yandell M."/>
        </authorList>
    </citation>
    <scope>NUCLEOTIDE SEQUENCE [MRNA] OF 26-78</scope>
    <source>
        <tissue>Venom duct</tissue>
    </source>
</reference>
<reference key="3">
    <citation type="journal article" date="2011" name="Proc. Natl. Acad. Sci. U.S.A.">
        <title>mu-Conotoxins that differentially block sodium channels Nav1.1 through 1.8 identify those responsible for action potentials in sciatic nerve.</title>
        <authorList>
            <person name="Wilson M.J."/>
            <person name="Yoshikami D."/>
            <person name="Azam L."/>
            <person name="Gajewiak J."/>
            <person name="Olivera B.M."/>
            <person name="Bulaj G."/>
            <person name="Zhang M.M."/>
        </authorList>
    </citation>
    <scope>FUNCTION</scope>
    <scope>SYNTHESIS OF 52-75</scope>
</reference>
<reference key="4">
    <citation type="journal article" date="2015" name="J. Neurophysiol.">
        <title>Alpha- and beta-subunit composition of voltage-gated sodium channels investigated with mu-conotoxins and the recently discovered muO'section sign'-conotoxin GVIIJ.</title>
        <authorList>
            <person name="Wilson M.J."/>
            <person name="Zhang M.M."/>
            <person name="Gajewiak J."/>
            <person name="Azam L."/>
            <person name="Rivier J.E."/>
            <person name="Olivera B.M."/>
            <person name="Yoshikami D."/>
        </authorList>
    </citation>
    <scope>FUNCTION</scope>
    <scope>SYNTHESIS OF 52-75</scope>
</reference>
<reference key="5">
    <citation type="journal article" date="2013" name="ACS Chem. Biol.">
        <title>Mammalian neuronal sodium channel blocker mu-conotoxin BuIIIB has a structured N-terminus that influences potency.</title>
        <authorList>
            <person name="Kuang Z."/>
            <person name="Zhang M.-M."/>
            <person name="Gupta K."/>
            <person name="Gajewiak J."/>
            <person name="Gulyas J."/>
            <person name="Balaram P."/>
            <person name="Rivier J.E."/>
            <person name="Olivera B.M."/>
            <person name="Yoshikami D."/>
            <person name="Bulaj G."/>
            <person name="Norton R.S."/>
        </authorList>
    </citation>
    <scope>STRUCTURE BY NMR OF 52-75</scope>
    <scope>SYNTHESIS OF 52-75</scope>
    <scope>MUTAGENESIS OF VAL-52; GLY-53; GLU-54; ARG-55 AND 52-VAL--ARG-55</scope>
    <scope>FUNCTION ON SCN3A</scope>
    <scope>DISULFIDE BONDS</scope>
</reference>
<name>CM3B_CONBU</name>
<dbReference type="EMBL" id="FJ240166">
    <property type="protein sequence ID" value="ACO50771.1"/>
    <property type="molecule type" value="mRNA"/>
</dbReference>
<dbReference type="PDB" id="2LO9">
    <property type="method" value="NMR"/>
    <property type="chains" value="A=52-75"/>
</dbReference>
<dbReference type="PDB" id="2LOC">
    <property type="method" value="NMR"/>
    <property type="chains" value="A=52-75"/>
</dbReference>
<dbReference type="PDBsum" id="2LO9"/>
<dbReference type="PDBsum" id="2LOC"/>
<dbReference type="BMRB" id="C1J5M6"/>
<dbReference type="SMR" id="C1J5M6"/>
<dbReference type="ConoServer" id="3715">
    <property type="toxin name" value="BuIIIB precursor"/>
</dbReference>
<dbReference type="GO" id="GO:0005576">
    <property type="term" value="C:extracellular region"/>
    <property type="evidence" value="ECO:0007669"/>
    <property type="project" value="UniProtKB-SubCell"/>
</dbReference>
<dbReference type="GO" id="GO:0008200">
    <property type="term" value="F:ion channel inhibitor activity"/>
    <property type="evidence" value="ECO:0007669"/>
    <property type="project" value="InterPro"/>
</dbReference>
<dbReference type="GO" id="GO:0017080">
    <property type="term" value="F:sodium channel regulator activity"/>
    <property type="evidence" value="ECO:0007669"/>
    <property type="project" value="UniProtKB-KW"/>
</dbReference>
<dbReference type="GO" id="GO:0090729">
    <property type="term" value="F:toxin activity"/>
    <property type="evidence" value="ECO:0007669"/>
    <property type="project" value="UniProtKB-KW"/>
</dbReference>
<dbReference type="InterPro" id="IPR004214">
    <property type="entry name" value="Conotoxin"/>
</dbReference>
<dbReference type="Pfam" id="PF02950">
    <property type="entry name" value="Conotoxin"/>
    <property type="match status" value="1"/>
</dbReference>